<dbReference type="EMBL" id="KC782513">
    <property type="protein sequence ID" value="AGO59814.1"/>
    <property type="molecule type" value="mRNA"/>
</dbReference>
<dbReference type="GO" id="GO:0005576">
    <property type="term" value="C:extracellular region"/>
    <property type="evidence" value="ECO:0007669"/>
    <property type="project" value="UniProtKB-SubCell"/>
</dbReference>
<dbReference type="GO" id="GO:0090729">
    <property type="term" value="F:toxin activity"/>
    <property type="evidence" value="ECO:0007669"/>
    <property type="project" value="UniProtKB-KW"/>
</dbReference>
<reference key="1">
    <citation type="journal article" date="2013" name="Peptides">
        <title>Precursor De13.1 from Conus delessertii defines the novel G gene superfamily.</title>
        <authorList>
            <person name="Aguilar M.B."/>
            <person name="Ortiz E."/>
            <person name="Kaas Q."/>
            <person name="Lopez-Vera E."/>
            <person name="Becerril B."/>
            <person name="Possani L.D."/>
            <person name="de la Cotera E.P."/>
        </authorList>
    </citation>
    <scope>NUCLEOTIDE SEQUENCE [MRNA]</scope>
    <scope>GAMMA-CARBOXYGLUTAMATION AT GLU-52</scope>
    <source>
        <tissue>Venom duct</tissue>
    </source>
</reference>
<protein>
    <recommendedName>
        <fullName>Conotoxin De13.1</fullName>
    </recommendedName>
    <alternativeName>
        <fullName>de13b</fullName>
    </alternativeName>
</protein>
<comment type="subcellular location">
    <subcellularLocation>
        <location>Secreted</location>
    </subcellularLocation>
</comment>
<comment type="tissue specificity">
    <text>Expressed by the venom duct.</text>
</comment>
<comment type="domain">
    <text>The cysteine framework is XIII (C-C-C-CC-C-C-C).</text>
</comment>
<comment type="PTM">
    <text>Contains 4 disulfide bonds.</text>
</comment>
<comment type="similarity">
    <text evidence="4">Belongs to the conotoxin G superfamily.</text>
</comment>
<sequence length="71" mass="7554">MSGMGVLLLVLLLVMPLAAFHQDGEGEATRRSGGLKRDCPTSCPTTCANGWECCKGYPCVRQHCSGCNHGK</sequence>
<accession>P0DM34</accession>
<accession>S4V9Q1</accession>
<feature type="signal peptide" evidence="2">
    <location>
        <begin position="1"/>
        <end position="19"/>
    </location>
</feature>
<feature type="propeptide" id="PRO_0000422425" evidence="1">
    <location>
        <begin position="20"/>
        <end position="35"/>
    </location>
</feature>
<feature type="chain" id="PRO_0000422426" description="Conotoxin De13.1">
    <location>
        <begin position="38"/>
        <end position="69"/>
    </location>
</feature>
<feature type="modified residue" description="4-hydroxyproline" evidence="1">
    <location>
        <position position="40"/>
    </location>
</feature>
<feature type="modified residue" description="4-hydroxyproline" evidence="1">
    <location>
        <position position="44"/>
    </location>
</feature>
<feature type="modified residue" description="6'-bromotryptophan" evidence="1">
    <location>
        <position position="51"/>
    </location>
</feature>
<feature type="modified residue" description="4-carboxyglutamate" evidence="3">
    <location>
        <position position="52"/>
    </location>
</feature>
<feature type="modified residue" description="5-hydroxylysine" evidence="1">
    <location>
        <position position="55"/>
    </location>
</feature>
<feature type="modified residue" description="4-hydroxyproline" evidence="1">
    <location>
        <position position="58"/>
    </location>
</feature>
<feature type="modified residue" description="Histidine amide" evidence="1">
    <location>
        <position position="69"/>
    </location>
</feature>
<proteinExistence type="evidence at protein level"/>
<keyword id="KW-0027">Amidation</keyword>
<keyword id="KW-0102">Bromination</keyword>
<keyword id="KW-0165">Cleavage on pair of basic residues</keyword>
<keyword id="KW-1015">Disulfide bond</keyword>
<keyword id="KW-0301">Gamma-carboxyglutamic acid</keyword>
<keyword id="KW-0379">Hydroxylation</keyword>
<keyword id="KW-0964">Secreted</keyword>
<keyword id="KW-0732">Signal</keyword>
<keyword id="KW-0800">Toxin</keyword>
<name>CDB_CONDE</name>
<evidence type="ECO:0000250" key="1"/>
<evidence type="ECO:0000255" key="2"/>
<evidence type="ECO:0000303" key="3">
    <source>
    </source>
</evidence>
<evidence type="ECO:0000305" key="4"/>
<organism>
    <name type="scientific">Conasprella delessertii</name>
    <name type="common">Sozon's cone</name>
    <name type="synonym">Conus delessertii</name>
    <dbReference type="NCBI Taxonomy" id="2547900"/>
    <lineage>
        <taxon>Eukaryota</taxon>
        <taxon>Metazoa</taxon>
        <taxon>Spiralia</taxon>
        <taxon>Lophotrochozoa</taxon>
        <taxon>Mollusca</taxon>
        <taxon>Gastropoda</taxon>
        <taxon>Caenogastropoda</taxon>
        <taxon>Neogastropoda</taxon>
        <taxon>Conoidea</taxon>
        <taxon>Conidae</taxon>
        <taxon>Conasprella</taxon>
        <taxon>Kohniconus</taxon>
    </lineage>
</organism>